<reference key="1">
    <citation type="journal article" date="1998" name="Science">
        <title>Genome sequence of the nematode C. elegans: a platform for investigating biology.</title>
        <authorList>
            <consortium name="The C. elegans sequencing consortium"/>
        </authorList>
    </citation>
    <scope>NUCLEOTIDE SEQUENCE [LARGE SCALE GENOMIC DNA]</scope>
    <source>
        <strain>Bristol N2</strain>
    </source>
</reference>
<reference key="2">
    <citation type="journal article" date="2004" name="J. Mol. Biol.">
        <title>Expression analysis of ABC transporters reveals differential functions of tandemly duplicated genes in Caenorhabditis elegans.</title>
        <authorList>
            <person name="Zhao Z."/>
            <person name="Sheps J.A."/>
            <person name="Ling V."/>
            <person name="Fang L.L."/>
            <person name="Baillie D.L."/>
        </authorList>
    </citation>
    <scope>TISSUE SPECIFICITY</scope>
    <scope>DEVELOPMENTAL STAGE</scope>
</reference>
<reference key="3">
    <citation type="journal article" date="2006" name="Mol. Biol. Cell">
        <title>ATP-binding cassette transporters are required for efficient RNA interference in Caenorhabditis elegans.</title>
        <authorList>
            <person name="Sundaram P."/>
            <person name="Echalier B."/>
            <person name="Han W."/>
            <person name="Hull D."/>
            <person name="Timmons L."/>
        </authorList>
    </citation>
    <scope>FUNCTION</scope>
</reference>
<reference key="4">
    <citation type="journal article" date="2007" name="PLoS Biol.">
        <title>High-throughput in vivo analysis of gene expression in Caenorhabditis elegans.</title>
        <authorList>
            <person name="Hunt-Newbury R."/>
            <person name="Viveiros R."/>
            <person name="Johnsen R."/>
            <person name="Mah A."/>
            <person name="Anastas D."/>
            <person name="Fang L."/>
            <person name="Halfnight E."/>
            <person name="Lee D."/>
            <person name="Lin J."/>
            <person name="Lorch A."/>
            <person name="McKay S."/>
            <person name="Okada H.M."/>
            <person name="Pan J."/>
            <person name="Schulz A.K."/>
            <person name="Tu D."/>
            <person name="Wong K."/>
            <person name="Zhao Z."/>
            <person name="Alexeyenko A."/>
            <person name="Burglin T."/>
            <person name="Sonnhammer E."/>
            <person name="Schnabel R."/>
            <person name="Jones S.J."/>
            <person name="Marra M.A."/>
            <person name="Baillie D.L."/>
            <person name="Moerman D.G."/>
        </authorList>
    </citation>
    <scope>TISSUE SPECIFICITY</scope>
</reference>
<reference key="5">
    <citation type="journal article" date="2008" name="Genetics">
        <title>Caenorhabditis elegans ABCRNAi transporters interact genetically with rde-2 and mut-7.</title>
        <authorList>
            <person name="Sundaram P."/>
            <person name="Han W."/>
            <person name="Cohen N."/>
            <person name="Echalier B."/>
            <person name="Albin J."/>
            <person name="Timmons L."/>
        </authorList>
    </citation>
    <scope>FUNCTION</scope>
</reference>
<keyword id="KW-0025">Alternative splicing</keyword>
<keyword id="KW-0067">ATP-binding</keyword>
<keyword id="KW-0472">Membrane</keyword>
<keyword id="KW-0547">Nucleotide-binding</keyword>
<keyword id="KW-1185">Reference proteome</keyword>
<keyword id="KW-0812">Transmembrane</keyword>
<keyword id="KW-1133">Transmembrane helix</keyword>
<keyword id="KW-0813">Transport</keyword>
<protein>
    <recommendedName>
        <fullName>ABC transporter ATP-binding protein/permease wht-1</fullName>
    </recommendedName>
</protein>
<sequence length="671" mass="75210">MHKAPISTLILDSLFSNMMLAEMMNDDQLELLKHQQTGIQPVVPEGCNLYWSSLNVTGPETKPTNFVDRFRNNMPKRRVKEILHNVSGMAESGKLLAILGSSGAGKTTLMNVLTSRNLTNLDVQGSILIDGRRANKWKIREMSAFVQQHDMFVGTMTAREHLQFMARLRMGDQYYSDHERQLRVEQVLTQMGLKKCADTVIGIPNQLKGLSCGEKKRLSFASEILTCPKILFCDEPTSGLDAFMAGHVVQALRSLADNGMTVIITIHQPSSHVYSLFNNVCLMACGRVIYLGPGDQAVPLFEKCGYPCPAYYNPADHLIRTLAVIDSDRATSMKTISKIRQGFLSTDLGQSVLAIGNANKLRAASFVTGSDTSEKTKTFFNQDYNASFWTQFLALFWRSWLTVIRDPNLLSVRLLQILITAFITGIVFFQTPVTPATIISINGIMFNHIRNMNFMLQFPNVPVITAELPIVLRENANGVYRTSAYFLAKNIAELPQYIILPILYNTIVYWMSGLYPNFWNYCFASLVTILITNVAISISYAVATIFANTDVAMTILPIFVVPIMAFGGFFITFDAIPSYFKWLSSLSYFKYGYEALAINEWDSIKVIPECFNSSMTAFALDSCPKNGHQVLESIDFSASHKIFDISILFGMFIGIRIIAYVALLIRSYNNT</sequence>
<comment type="function">
    <text evidence="4 6">Required for efficient RNA interference (RNAi) (PubMed:16723499, PubMed:18245353). Plays a role in germline development (PubMed:16723499, PubMed:18245353).</text>
</comment>
<comment type="subcellular location">
    <subcellularLocation>
        <location evidence="7">Membrane</location>
        <topology evidence="1">Multi-pass membrane protein</topology>
    </subcellularLocation>
</comment>
<comment type="alternative products">
    <event type="alternative splicing"/>
    <isoform>
        <id>Q11180-1</id>
        <name evidence="8">a</name>
        <sequence type="displayed"/>
    </isoform>
    <isoform>
        <id>Q11180-2</id>
        <name evidence="9">b</name>
        <sequence type="described" ref="VSP_060561"/>
    </isoform>
</comment>
<comment type="tissue specificity">
    <text evidence="3 5">Expressed in the intestine in both larvae and adults (PubMed:17850180). Expressed in the gut of males (PubMed:15522294).</text>
</comment>
<comment type="developmental stage">
    <text evidence="3">Expressed in embryos.</text>
</comment>
<comment type="similarity">
    <text evidence="7">Belongs to the ABC transporter superfamily. ABCG family. Eye pigment precursor importer (TC 3.A.1.204) subfamily.</text>
</comment>
<proteinExistence type="evidence at transcript level"/>
<accession>Q11180</accession>
<accession>A0A2K5ATT2</accession>
<accession>A0A2K5ATU8</accession>
<gene>
    <name evidence="8" type="primary">wht-1</name>
    <name evidence="8" type="ORF">C05D10.3</name>
</gene>
<name>WHT1_CAEEL</name>
<dbReference type="EMBL" id="BX284603">
    <property type="protein sequence ID" value="SPC47526.1"/>
    <property type="molecule type" value="Genomic_DNA"/>
</dbReference>
<dbReference type="EMBL" id="BX284603">
    <property type="protein sequence ID" value="SPC47527.1"/>
    <property type="molecule type" value="Genomic_DNA"/>
</dbReference>
<dbReference type="PIR" id="B88474">
    <property type="entry name" value="B88474"/>
</dbReference>
<dbReference type="RefSeq" id="NP_001348731.1">
    <molecule id="Q11180-1"/>
    <property type="nucleotide sequence ID" value="NM_001361719.2"/>
</dbReference>
<dbReference type="RefSeq" id="NP_001348732.1">
    <molecule id="Q11180-2"/>
    <property type="nucleotide sequence ID" value="NM_001361720.3"/>
</dbReference>
<dbReference type="SMR" id="Q11180"/>
<dbReference type="FunCoup" id="Q11180">
    <property type="interactions" value="584"/>
</dbReference>
<dbReference type="STRING" id="6239.C05D10.3a.1"/>
<dbReference type="TCDB" id="3.A.1.204.3">
    <property type="family name" value="the atp-binding cassette (abc) superfamily"/>
</dbReference>
<dbReference type="PaxDb" id="6239-C05D10.3"/>
<dbReference type="PeptideAtlas" id="Q11180"/>
<dbReference type="EnsemblMetazoa" id="C05D10.3a.1">
    <molecule id="Q11180-1"/>
    <property type="protein sequence ID" value="C05D10.3a.1"/>
    <property type="gene ID" value="WBGene00015479"/>
</dbReference>
<dbReference type="EnsemblMetazoa" id="C05D10.3b.1">
    <molecule id="Q11180-2"/>
    <property type="protein sequence ID" value="C05D10.3b.1"/>
    <property type="gene ID" value="WBGene00015479"/>
</dbReference>
<dbReference type="GeneID" id="175859"/>
<dbReference type="AGR" id="WB:WBGene00015479"/>
<dbReference type="WormBase" id="C05D10.3a">
    <molecule id="Q11180-1"/>
    <property type="protein sequence ID" value="CE52537"/>
    <property type="gene ID" value="WBGene00015479"/>
    <property type="gene designation" value="wht-1"/>
</dbReference>
<dbReference type="WormBase" id="C05D10.3b">
    <molecule id="Q11180-2"/>
    <property type="protein sequence ID" value="CE52612"/>
    <property type="gene ID" value="WBGene00015479"/>
    <property type="gene designation" value="wht-1"/>
</dbReference>
<dbReference type="eggNOG" id="KOG0061">
    <property type="taxonomic scope" value="Eukaryota"/>
</dbReference>
<dbReference type="GeneTree" id="ENSGT00970000196382"/>
<dbReference type="HOGENOM" id="CLU_000604_57_6_1"/>
<dbReference type="InParanoid" id="Q11180"/>
<dbReference type="OrthoDB" id="66620at2759"/>
<dbReference type="PhylomeDB" id="Q11180"/>
<dbReference type="PRO" id="PR:Q11180"/>
<dbReference type="Proteomes" id="UP000001940">
    <property type="component" value="Chromosome III"/>
</dbReference>
<dbReference type="Bgee" id="WBGene00015479">
    <property type="expression patterns" value="Expressed in embryo and 3 other cell types or tissues"/>
</dbReference>
<dbReference type="GO" id="GO:0005886">
    <property type="term" value="C:plasma membrane"/>
    <property type="evidence" value="ECO:0000318"/>
    <property type="project" value="GO_Central"/>
</dbReference>
<dbReference type="GO" id="GO:0140359">
    <property type="term" value="F:ABC-type transporter activity"/>
    <property type="evidence" value="ECO:0007669"/>
    <property type="project" value="InterPro"/>
</dbReference>
<dbReference type="GO" id="GO:0005524">
    <property type="term" value="F:ATP binding"/>
    <property type="evidence" value="ECO:0007669"/>
    <property type="project" value="UniProtKB-KW"/>
</dbReference>
<dbReference type="GO" id="GO:0016887">
    <property type="term" value="F:ATP hydrolysis activity"/>
    <property type="evidence" value="ECO:0007669"/>
    <property type="project" value="InterPro"/>
</dbReference>
<dbReference type="GO" id="GO:0042626">
    <property type="term" value="F:ATPase-coupled transmembrane transporter activity"/>
    <property type="evidence" value="ECO:0000318"/>
    <property type="project" value="GO_Central"/>
</dbReference>
<dbReference type="GO" id="GO:0035194">
    <property type="term" value="P:regulatory ncRNA-mediated post-transcriptional gene silencing"/>
    <property type="evidence" value="ECO:0000315"/>
    <property type="project" value="UniProtKB"/>
</dbReference>
<dbReference type="GO" id="GO:0055085">
    <property type="term" value="P:transmembrane transport"/>
    <property type="evidence" value="ECO:0000318"/>
    <property type="project" value="GO_Central"/>
</dbReference>
<dbReference type="CDD" id="cd03213">
    <property type="entry name" value="ABCG_EPDR"/>
    <property type="match status" value="1"/>
</dbReference>
<dbReference type="FunFam" id="3.40.50.300:FF:002134">
    <property type="entry name" value="ABC transporter ATP-binding protein/permease wht-1"/>
    <property type="match status" value="1"/>
</dbReference>
<dbReference type="Gene3D" id="3.40.50.300">
    <property type="entry name" value="P-loop containing nucleotide triphosphate hydrolases"/>
    <property type="match status" value="1"/>
</dbReference>
<dbReference type="InterPro" id="IPR003593">
    <property type="entry name" value="AAA+_ATPase"/>
</dbReference>
<dbReference type="InterPro" id="IPR013525">
    <property type="entry name" value="ABC2_TM"/>
</dbReference>
<dbReference type="InterPro" id="IPR003439">
    <property type="entry name" value="ABC_transporter-like_ATP-bd"/>
</dbReference>
<dbReference type="InterPro" id="IPR043926">
    <property type="entry name" value="ABCG_dom"/>
</dbReference>
<dbReference type="InterPro" id="IPR050352">
    <property type="entry name" value="ABCG_transporters"/>
</dbReference>
<dbReference type="InterPro" id="IPR027417">
    <property type="entry name" value="P-loop_NTPase"/>
</dbReference>
<dbReference type="InterPro" id="IPR005284">
    <property type="entry name" value="Pigment_permease/Abcg"/>
</dbReference>
<dbReference type="NCBIfam" id="TIGR00955">
    <property type="entry name" value="3a01204"/>
    <property type="match status" value="1"/>
</dbReference>
<dbReference type="PANTHER" id="PTHR48041:SF93">
    <property type="entry name" value="ABC TRANSPORTER ATP-BINDING PROTEIN_PERMEASE WHT-1"/>
    <property type="match status" value="1"/>
</dbReference>
<dbReference type="PANTHER" id="PTHR48041">
    <property type="entry name" value="ABC TRANSPORTER G FAMILY MEMBER 28"/>
    <property type="match status" value="1"/>
</dbReference>
<dbReference type="Pfam" id="PF01061">
    <property type="entry name" value="ABC2_membrane"/>
    <property type="match status" value="1"/>
</dbReference>
<dbReference type="Pfam" id="PF19055">
    <property type="entry name" value="ABC2_membrane_7"/>
    <property type="match status" value="1"/>
</dbReference>
<dbReference type="Pfam" id="PF00005">
    <property type="entry name" value="ABC_tran"/>
    <property type="match status" value="1"/>
</dbReference>
<dbReference type="SMART" id="SM00382">
    <property type="entry name" value="AAA"/>
    <property type="match status" value="1"/>
</dbReference>
<dbReference type="SUPFAM" id="SSF52540">
    <property type="entry name" value="P-loop containing nucleoside triphosphate hydrolases"/>
    <property type="match status" value="1"/>
</dbReference>
<dbReference type="PROSITE" id="PS50893">
    <property type="entry name" value="ABC_TRANSPORTER_2"/>
    <property type="match status" value="1"/>
</dbReference>
<feature type="chain" id="PRO_0000449487" description="ABC transporter ATP-binding protein/permease wht-1">
    <location>
        <begin position="1"/>
        <end position="671"/>
    </location>
</feature>
<feature type="topological domain" description="Cytoplasmic" evidence="7">
    <location>
        <begin position="1"/>
        <end position="408"/>
    </location>
</feature>
<feature type="transmembrane region" description="Helical; Name=1" evidence="1">
    <location>
        <begin position="409"/>
        <end position="429"/>
    </location>
</feature>
<feature type="topological domain" description="Extracellular" evidence="7">
    <location>
        <begin position="430"/>
        <end position="451"/>
    </location>
</feature>
<feature type="transmembrane region" description="Helical; Name=2" evidence="1">
    <location>
        <begin position="452"/>
        <end position="472"/>
    </location>
</feature>
<feature type="topological domain" description="Cytoplasmic" evidence="7">
    <location>
        <begin position="473"/>
        <end position="497"/>
    </location>
</feature>
<feature type="transmembrane region" description="Helical; Name=3" evidence="1">
    <location>
        <begin position="498"/>
        <end position="518"/>
    </location>
</feature>
<feature type="topological domain" description="Extracellular" evidence="7">
    <location>
        <begin position="519"/>
        <end position="525"/>
    </location>
</feature>
<feature type="transmembrane region" description="Helical; Name=4" evidence="1">
    <location>
        <begin position="526"/>
        <end position="546"/>
    </location>
</feature>
<feature type="topological domain" description="Cytoplasmic" evidence="7">
    <location>
        <begin position="547"/>
        <end position="550"/>
    </location>
</feature>
<feature type="transmembrane region" description="Helical; Name=5" evidence="1">
    <location>
        <begin position="551"/>
        <end position="571"/>
    </location>
</feature>
<feature type="topological domain" description="Extracellular" evidence="7">
    <location>
        <begin position="572"/>
        <end position="644"/>
    </location>
</feature>
<feature type="transmembrane region" description="Helical; Name=6" evidence="1">
    <location>
        <begin position="645"/>
        <end position="665"/>
    </location>
</feature>
<feature type="topological domain" description="Cytoplasmic" evidence="7">
    <location>
        <begin position="666"/>
        <end position="671"/>
    </location>
</feature>
<feature type="domain" description="ABC transporter" evidence="2">
    <location>
        <begin position="64"/>
        <end position="310"/>
    </location>
</feature>
<feature type="binding site" evidence="2">
    <location>
        <begin position="100"/>
        <end position="107"/>
    </location>
    <ligand>
        <name>ATP</name>
        <dbReference type="ChEBI" id="CHEBI:30616"/>
    </ligand>
</feature>
<feature type="splice variant" id="VSP_060561" description="In isoform b." evidence="7">
    <location>
        <begin position="1"/>
        <end position="259"/>
    </location>
</feature>
<evidence type="ECO:0000255" key="1"/>
<evidence type="ECO:0000255" key="2">
    <source>
        <dbReference type="PROSITE-ProRule" id="PRU00434"/>
    </source>
</evidence>
<evidence type="ECO:0000269" key="3">
    <source>
    </source>
</evidence>
<evidence type="ECO:0000269" key="4">
    <source>
    </source>
</evidence>
<evidence type="ECO:0000269" key="5">
    <source>
    </source>
</evidence>
<evidence type="ECO:0000269" key="6">
    <source>
    </source>
</evidence>
<evidence type="ECO:0000305" key="7"/>
<evidence type="ECO:0000312" key="8">
    <source>
        <dbReference type="WormBase" id="C05D10.3a"/>
    </source>
</evidence>
<evidence type="ECO:0000312" key="9">
    <source>
        <dbReference type="WormBase" id="C05D10.3b"/>
    </source>
</evidence>
<organism>
    <name type="scientific">Caenorhabditis elegans</name>
    <dbReference type="NCBI Taxonomy" id="6239"/>
    <lineage>
        <taxon>Eukaryota</taxon>
        <taxon>Metazoa</taxon>
        <taxon>Ecdysozoa</taxon>
        <taxon>Nematoda</taxon>
        <taxon>Chromadorea</taxon>
        <taxon>Rhabditida</taxon>
        <taxon>Rhabditina</taxon>
        <taxon>Rhabditomorpha</taxon>
        <taxon>Rhabditoidea</taxon>
        <taxon>Rhabditidae</taxon>
        <taxon>Peloderinae</taxon>
        <taxon>Caenorhabditis</taxon>
    </lineage>
</organism>